<accession>Q2YW87</accession>
<keyword id="KW-0285">Flavoprotein</keyword>
<keyword id="KW-0288">FMN</keyword>
<keyword id="KW-0520">NAD</keyword>
<keyword id="KW-0521">NADP</keyword>
<keyword id="KW-0560">Oxidoreductase</keyword>
<proteinExistence type="inferred from homology"/>
<organism>
    <name type="scientific">Staphylococcus aureus (strain bovine RF122 / ET3-1)</name>
    <dbReference type="NCBI Taxonomy" id="273036"/>
    <lineage>
        <taxon>Bacteria</taxon>
        <taxon>Bacillati</taxon>
        <taxon>Bacillota</taxon>
        <taxon>Bacilli</taxon>
        <taxon>Bacillales</taxon>
        <taxon>Staphylococcaceae</taxon>
        <taxon>Staphylococcus</taxon>
    </lineage>
</organism>
<reference key="1">
    <citation type="journal article" date="2007" name="PLoS ONE">
        <title>Molecular correlates of host specialization in Staphylococcus aureus.</title>
        <authorList>
            <person name="Herron-Olson L."/>
            <person name="Fitzgerald J.R."/>
            <person name="Musser J.M."/>
            <person name="Kapur V."/>
        </authorList>
    </citation>
    <scope>NUCLEOTIDE SEQUENCE [LARGE SCALE GENOMIC DNA]</scope>
    <source>
        <strain>bovine RF122 / ET3-1</strain>
    </source>
</reference>
<name>Y2397_STAAB</name>
<evidence type="ECO:0000305" key="1"/>
<feature type="chain" id="PRO_0000277531" description="Putative NAD(P)H nitroreductase SAB2397c">
    <location>
        <begin position="1"/>
        <end position="223"/>
    </location>
</feature>
<comment type="cofactor">
    <cofactor evidence="1">
        <name>FMN</name>
        <dbReference type="ChEBI" id="CHEBI:58210"/>
    </cofactor>
</comment>
<comment type="similarity">
    <text evidence="1">Belongs to the nitroreductase family.</text>
</comment>
<sequence length="223" mass="25375">MSNMNQTIMDAFHFRHATKQFDPQKKVSKEDFETILESGRLSPSSLGLEPWKFVVIQDQALRDELKAHSWGAAKQLDTASHFVLIFARKNVTSRSPYVQHMLRDIKKYEAQTIPAVEQKFDAFQADFHISDNDQALYDWSSKQTYIALGNMMTTAALLGIDSCPMEGFSLDTVTDILANKGILDTEQFGLSVMVAFGYRQQDPPKNKTRQAYEDVIEWVGPKE</sequence>
<dbReference type="EC" id="1.-.-.-"/>
<dbReference type="EMBL" id="AJ938182">
    <property type="protein sequence ID" value="CAI82085.1"/>
    <property type="molecule type" value="Genomic_DNA"/>
</dbReference>
<dbReference type="RefSeq" id="WP_000069098.1">
    <property type="nucleotide sequence ID" value="NC_007622.1"/>
</dbReference>
<dbReference type="SMR" id="Q2YW87"/>
<dbReference type="KEGG" id="sab:SAB2397c"/>
<dbReference type="HOGENOM" id="CLU_070764_4_1_9"/>
<dbReference type="GO" id="GO:0005829">
    <property type="term" value="C:cytosol"/>
    <property type="evidence" value="ECO:0007669"/>
    <property type="project" value="TreeGrafter"/>
</dbReference>
<dbReference type="GO" id="GO:0046857">
    <property type="term" value="F:oxidoreductase activity, acting on other nitrogenous compounds as donors, with NAD or NADP as acceptor"/>
    <property type="evidence" value="ECO:0007669"/>
    <property type="project" value="TreeGrafter"/>
</dbReference>
<dbReference type="GO" id="GO:0046256">
    <property type="term" value="P:2,4,6-trinitrotoluene catabolic process"/>
    <property type="evidence" value="ECO:0007669"/>
    <property type="project" value="TreeGrafter"/>
</dbReference>
<dbReference type="CDD" id="cd02149">
    <property type="entry name" value="NfsB-like"/>
    <property type="match status" value="1"/>
</dbReference>
<dbReference type="FunFam" id="3.40.109.10:FF:000008">
    <property type="entry name" value="Putative NAD(P)H nitroreductase"/>
    <property type="match status" value="1"/>
</dbReference>
<dbReference type="Gene3D" id="3.40.109.10">
    <property type="entry name" value="NADH Oxidase"/>
    <property type="match status" value="1"/>
</dbReference>
<dbReference type="InterPro" id="IPR033878">
    <property type="entry name" value="NfsB-like"/>
</dbReference>
<dbReference type="InterPro" id="IPR029479">
    <property type="entry name" value="Nitroreductase"/>
</dbReference>
<dbReference type="InterPro" id="IPR000415">
    <property type="entry name" value="Nitroreductase-like"/>
</dbReference>
<dbReference type="InterPro" id="IPR050627">
    <property type="entry name" value="Nitroreductase/BluB"/>
</dbReference>
<dbReference type="PANTHER" id="PTHR23026">
    <property type="entry name" value="NADPH NITROREDUCTASE"/>
    <property type="match status" value="1"/>
</dbReference>
<dbReference type="PANTHER" id="PTHR23026:SF125">
    <property type="entry name" value="OXYGEN-INSENSITIVE NAD(P)H NITROREDUCTASE"/>
    <property type="match status" value="1"/>
</dbReference>
<dbReference type="Pfam" id="PF00881">
    <property type="entry name" value="Nitroreductase"/>
    <property type="match status" value="1"/>
</dbReference>
<dbReference type="SUPFAM" id="SSF55469">
    <property type="entry name" value="FMN-dependent nitroreductase-like"/>
    <property type="match status" value="1"/>
</dbReference>
<protein>
    <recommendedName>
        <fullName>Putative NAD(P)H nitroreductase SAB2397c</fullName>
        <ecNumber>1.-.-.-</ecNumber>
    </recommendedName>
</protein>
<gene>
    <name type="ordered locus">SAB2397c</name>
</gene>